<reference key="1">
    <citation type="journal article" date="1997" name="Biochem. Mol. Biol. Int.">
        <title>Primary structure of the smallest (6.4-kDa) subunit of human and bovine ubiquinol-cytochrome c reductase deduced from cDNA sequences.</title>
        <authorList>
            <person name="Islam M.M."/>
            <person name="Suzuki H."/>
            <person name="Yoneda M."/>
            <person name="Tanaka M."/>
        </authorList>
    </citation>
    <scope>NUCLEOTIDE SEQUENCE [MRNA]</scope>
    <source>
        <tissue>Fibroblast</tissue>
    </source>
</reference>
<reference key="2">
    <citation type="journal article" date="2004" name="Nat. Genet.">
        <title>Complete sequencing and characterization of 21,243 full-length human cDNAs.</title>
        <authorList>
            <person name="Ota T."/>
            <person name="Suzuki Y."/>
            <person name="Nishikawa T."/>
            <person name="Otsuki T."/>
            <person name="Sugiyama T."/>
            <person name="Irie R."/>
            <person name="Wakamatsu A."/>
            <person name="Hayashi K."/>
            <person name="Sato H."/>
            <person name="Nagai K."/>
            <person name="Kimura K."/>
            <person name="Makita H."/>
            <person name="Sekine M."/>
            <person name="Obayashi M."/>
            <person name="Nishi T."/>
            <person name="Shibahara T."/>
            <person name="Tanaka T."/>
            <person name="Ishii S."/>
            <person name="Yamamoto J."/>
            <person name="Saito K."/>
            <person name="Kawai Y."/>
            <person name="Isono Y."/>
            <person name="Nakamura Y."/>
            <person name="Nagahari K."/>
            <person name="Murakami K."/>
            <person name="Yasuda T."/>
            <person name="Iwayanagi T."/>
            <person name="Wagatsuma M."/>
            <person name="Shiratori A."/>
            <person name="Sudo H."/>
            <person name="Hosoiri T."/>
            <person name="Kaku Y."/>
            <person name="Kodaira H."/>
            <person name="Kondo H."/>
            <person name="Sugawara M."/>
            <person name="Takahashi M."/>
            <person name="Kanda K."/>
            <person name="Yokoi T."/>
            <person name="Furuya T."/>
            <person name="Kikkawa E."/>
            <person name="Omura Y."/>
            <person name="Abe K."/>
            <person name="Kamihara K."/>
            <person name="Katsuta N."/>
            <person name="Sato K."/>
            <person name="Tanikawa M."/>
            <person name="Yamazaki M."/>
            <person name="Ninomiya K."/>
            <person name="Ishibashi T."/>
            <person name="Yamashita H."/>
            <person name="Murakawa K."/>
            <person name="Fujimori K."/>
            <person name="Tanai H."/>
            <person name="Kimata M."/>
            <person name="Watanabe M."/>
            <person name="Hiraoka S."/>
            <person name="Chiba Y."/>
            <person name="Ishida S."/>
            <person name="Ono Y."/>
            <person name="Takiguchi S."/>
            <person name="Watanabe S."/>
            <person name="Yosida M."/>
            <person name="Hotuta T."/>
            <person name="Kusano J."/>
            <person name="Kanehori K."/>
            <person name="Takahashi-Fujii A."/>
            <person name="Hara H."/>
            <person name="Tanase T.-O."/>
            <person name="Nomura Y."/>
            <person name="Togiya S."/>
            <person name="Komai F."/>
            <person name="Hara R."/>
            <person name="Takeuchi K."/>
            <person name="Arita M."/>
            <person name="Imose N."/>
            <person name="Musashino K."/>
            <person name="Yuuki H."/>
            <person name="Oshima A."/>
            <person name="Sasaki N."/>
            <person name="Aotsuka S."/>
            <person name="Yoshikawa Y."/>
            <person name="Matsunawa H."/>
            <person name="Ichihara T."/>
            <person name="Shiohata N."/>
            <person name="Sano S."/>
            <person name="Moriya S."/>
            <person name="Momiyama H."/>
            <person name="Satoh N."/>
            <person name="Takami S."/>
            <person name="Terashima Y."/>
            <person name="Suzuki O."/>
            <person name="Nakagawa S."/>
            <person name="Senoh A."/>
            <person name="Mizoguchi H."/>
            <person name="Goto Y."/>
            <person name="Shimizu F."/>
            <person name="Wakebe H."/>
            <person name="Hishigaki H."/>
            <person name="Watanabe T."/>
            <person name="Sugiyama A."/>
            <person name="Takemoto M."/>
            <person name="Kawakami B."/>
            <person name="Yamazaki M."/>
            <person name="Watanabe K."/>
            <person name="Kumagai A."/>
            <person name="Itakura S."/>
            <person name="Fukuzumi Y."/>
            <person name="Fujimori Y."/>
            <person name="Komiyama M."/>
            <person name="Tashiro H."/>
            <person name="Tanigami A."/>
            <person name="Fujiwara T."/>
            <person name="Ono T."/>
            <person name="Yamada K."/>
            <person name="Fujii Y."/>
            <person name="Ozaki K."/>
            <person name="Hirao M."/>
            <person name="Ohmori Y."/>
            <person name="Kawabata A."/>
            <person name="Hikiji T."/>
            <person name="Kobatake N."/>
            <person name="Inagaki H."/>
            <person name="Ikema Y."/>
            <person name="Okamoto S."/>
            <person name="Okitani R."/>
            <person name="Kawakami T."/>
            <person name="Noguchi S."/>
            <person name="Itoh T."/>
            <person name="Shigeta K."/>
            <person name="Senba T."/>
            <person name="Matsumura K."/>
            <person name="Nakajima Y."/>
            <person name="Mizuno T."/>
            <person name="Morinaga M."/>
            <person name="Sasaki M."/>
            <person name="Togashi T."/>
            <person name="Oyama M."/>
            <person name="Hata H."/>
            <person name="Watanabe M."/>
            <person name="Komatsu T."/>
            <person name="Mizushima-Sugano J."/>
            <person name="Satoh T."/>
            <person name="Shirai Y."/>
            <person name="Takahashi Y."/>
            <person name="Nakagawa K."/>
            <person name="Okumura K."/>
            <person name="Nagase T."/>
            <person name="Nomura N."/>
            <person name="Kikuchi H."/>
            <person name="Masuho Y."/>
            <person name="Yamashita R."/>
            <person name="Nakai K."/>
            <person name="Yada T."/>
            <person name="Nakamura Y."/>
            <person name="Ohara O."/>
            <person name="Isogai T."/>
            <person name="Sugano S."/>
        </authorList>
    </citation>
    <scope>NUCLEOTIDE SEQUENCE [LARGE SCALE MRNA]</scope>
    <source>
        <tissue>Thalamus</tissue>
    </source>
</reference>
<reference key="3">
    <citation type="journal article" date="2004" name="Nature">
        <title>The DNA sequence and biology of human chromosome 19.</title>
        <authorList>
            <person name="Grimwood J."/>
            <person name="Gordon L.A."/>
            <person name="Olsen A.S."/>
            <person name="Terry A."/>
            <person name="Schmutz J."/>
            <person name="Lamerdin J.E."/>
            <person name="Hellsten U."/>
            <person name="Goodstein D."/>
            <person name="Couronne O."/>
            <person name="Tran-Gyamfi M."/>
            <person name="Aerts A."/>
            <person name="Altherr M."/>
            <person name="Ashworth L."/>
            <person name="Bajorek E."/>
            <person name="Black S."/>
            <person name="Branscomb E."/>
            <person name="Caenepeel S."/>
            <person name="Carrano A.V."/>
            <person name="Caoile C."/>
            <person name="Chan Y.M."/>
            <person name="Christensen M."/>
            <person name="Cleland C.A."/>
            <person name="Copeland A."/>
            <person name="Dalin E."/>
            <person name="Dehal P."/>
            <person name="Denys M."/>
            <person name="Detter J.C."/>
            <person name="Escobar J."/>
            <person name="Flowers D."/>
            <person name="Fotopulos D."/>
            <person name="Garcia C."/>
            <person name="Georgescu A.M."/>
            <person name="Glavina T."/>
            <person name="Gomez M."/>
            <person name="Gonzales E."/>
            <person name="Groza M."/>
            <person name="Hammon N."/>
            <person name="Hawkins T."/>
            <person name="Haydu L."/>
            <person name="Ho I."/>
            <person name="Huang W."/>
            <person name="Israni S."/>
            <person name="Jett J."/>
            <person name="Kadner K."/>
            <person name="Kimball H."/>
            <person name="Kobayashi A."/>
            <person name="Larionov V."/>
            <person name="Leem S.-H."/>
            <person name="Lopez F."/>
            <person name="Lou Y."/>
            <person name="Lowry S."/>
            <person name="Malfatti S."/>
            <person name="Martinez D."/>
            <person name="McCready P.M."/>
            <person name="Medina C."/>
            <person name="Morgan J."/>
            <person name="Nelson K."/>
            <person name="Nolan M."/>
            <person name="Ovcharenko I."/>
            <person name="Pitluck S."/>
            <person name="Pollard M."/>
            <person name="Popkie A.P."/>
            <person name="Predki P."/>
            <person name="Quan G."/>
            <person name="Ramirez L."/>
            <person name="Rash S."/>
            <person name="Retterer J."/>
            <person name="Rodriguez A."/>
            <person name="Rogers S."/>
            <person name="Salamov A."/>
            <person name="Salazar A."/>
            <person name="She X."/>
            <person name="Smith D."/>
            <person name="Slezak T."/>
            <person name="Solovyev V."/>
            <person name="Thayer N."/>
            <person name="Tice H."/>
            <person name="Tsai M."/>
            <person name="Ustaszewska A."/>
            <person name="Vo N."/>
            <person name="Wagner M."/>
            <person name="Wheeler J."/>
            <person name="Wu K."/>
            <person name="Xie G."/>
            <person name="Yang J."/>
            <person name="Dubchak I."/>
            <person name="Furey T.S."/>
            <person name="DeJong P."/>
            <person name="Dickson M."/>
            <person name="Gordon D."/>
            <person name="Eichler E.E."/>
            <person name="Pennacchio L.A."/>
            <person name="Richardson P."/>
            <person name="Stubbs L."/>
            <person name="Rokhsar D.S."/>
            <person name="Myers R.M."/>
            <person name="Rubin E.M."/>
            <person name="Lucas S.M."/>
        </authorList>
    </citation>
    <scope>NUCLEOTIDE SEQUENCE [LARGE SCALE GENOMIC DNA]</scope>
</reference>
<reference key="4">
    <citation type="submission" date="2005-09" db="EMBL/GenBank/DDBJ databases">
        <authorList>
            <person name="Mural R.J."/>
            <person name="Istrail S."/>
            <person name="Sutton G.G."/>
            <person name="Florea L."/>
            <person name="Halpern A.L."/>
            <person name="Mobarry C.M."/>
            <person name="Lippert R."/>
            <person name="Walenz B."/>
            <person name="Shatkay H."/>
            <person name="Dew I."/>
            <person name="Miller J.R."/>
            <person name="Flanigan M.J."/>
            <person name="Edwards N.J."/>
            <person name="Bolanos R."/>
            <person name="Fasulo D."/>
            <person name="Halldorsson B.V."/>
            <person name="Hannenhalli S."/>
            <person name="Turner R."/>
            <person name="Yooseph S."/>
            <person name="Lu F."/>
            <person name="Nusskern D.R."/>
            <person name="Shue B.C."/>
            <person name="Zheng X.H."/>
            <person name="Zhong F."/>
            <person name="Delcher A.L."/>
            <person name="Huson D.H."/>
            <person name="Kravitz S.A."/>
            <person name="Mouchard L."/>
            <person name="Reinert K."/>
            <person name="Remington K.A."/>
            <person name="Clark A.G."/>
            <person name="Waterman M.S."/>
            <person name="Eichler E.E."/>
            <person name="Adams M.D."/>
            <person name="Hunkapiller M.W."/>
            <person name="Myers E.W."/>
            <person name="Venter J.C."/>
        </authorList>
    </citation>
    <scope>NUCLEOTIDE SEQUENCE [LARGE SCALE GENOMIC DNA]</scope>
</reference>
<reference key="5">
    <citation type="journal article" date="2004" name="Genome Res.">
        <title>The status, quality, and expansion of the NIH full-length cDNA project: the Mammalian Gene Collection (MGC).</title>
        <authorList>
            <consortium name="The MGC Project Team"/>
        </authorList>
    </citation>
    <scope>NUCLEOTIDE SEQUENCE [LARGE SCALE MRNA]</scope>
    <source>
        <tissue>Lung</tissue>
    </source>
</reference>
<reference key="6">
    <citation type="journal article" date="2017" name="Cell">
        <title>Architecture of human mitochondrial respiratory megacomplex I2III2IV2.</title>
        <authorList>
            <person name="Guo R."/>
            <person name="Zong S."/>
            <person name="Wu M."/>
            <person name="Gu J."/>
            <person name="Yang M."/>
        </authorList>
    </citation>
    <scope>STRUCTURE BY ELECTRON MICROSCOPY (3.40 ANGSTROMS) OF 1-52</scope>
</reference>
<sequence>MVTRFLGPRYRELVKNWVPTAYTWGAVGAVGLVWATDWRLILDWVPYINGKFKKDN</sequence>
<proteinExistence type="evidence at protein level"/>
<evidence type="ECO:0000250" key="1">
    <source>
        <dbReference type="UniProtKB" id="P07552"/>
    </source>
</evidence>
<evidence type="ECO:0000250" key="2">
    <source>
        <dbReference type="UniProtKB" id="P37299"/>
    </source>
</evidence>
<evidence type="ECO:0000269" key="3">
    <source>
    </source>
</evidence>
<evidence type="ECO:0000305" key="4"/>
<evidence type="ECO:0007829" key="5">
    <source>
        <dbReference type="PDB" id="5XTE"/>
    </source>
</evidence>
<accession>O14957</accession>
<accession>B2R542</accession>
<accession>D6W5Z4</accession>
<accession>Q9UEA3</accession>
<accession>Q9UPK4</accession>
<gene>
    <name type="primary">UQCR11</name>
    <name type="synonym">UQCR</name>
</gene>
<feature type="chain" id="PRO_0000193560" description="Cytochrome b-c1 complex subunit 10">
    <location>
        <begin position="1"/>
        <end position="56"/>
    </location>
</feature>
<feature type="topological domain" description="Mitochondrial matrix" evidence="3">
    <location>
        <begin position="1"/>
        <end position="12"/>
    </location>
</feature>
<feature type="transmembrane region" description="Helical" evidence="3">
    <location>
        <begin position="13"/>
        <end position="35"/>
    </location>
</feature>
<feature type="topological domain" description="Mitochondrial intermembrane" evidence="3">
    <location>
        <begin position="36"/>
        <end position="56"/>
    </location>
</feature>
<feature type="helix" evidence="5">
    <location>
        <begin position="3"/>
        <end position="5"/>
    </location>
</feature>
<feature type="helix" evidence="5">
    <location>
        <begin position="8"/>
        <end position="35"/>
    </location>
</feature>
<feature type="helix" evidence="5">
    <location>
        <begin position="39"/>
        <end position="42"/>
    </location>
</feature>
<feature type="strand" evidence="5">
    <location>
        <begin position="45"/>
        <end position="47"/>
    </location>
</feature>
<dbReference type="EMBL" id="D55636">
    <property type="protein sequence ID" value="BAA21748.1"/>
    <property type="molecule type" value="mRNA"/>
</dbReference>
<dbReference type="EMBL" id="AK312053">
    <property type="protein sequence ID" value="BAG34989.1"/>
    <property type="molecule type" value="mRNA"/>
</dbReference>
<dbReference type="EMBL" id="AC005321">
    <property type="protein sequence ID" value="AAC27374.1"/>
    <property type="molecule type" value="Genomic_DNA"/>
</dbReference>
<dbReference type="EMBL" id="AC005943">
    <property type="protein sequence ID" value="AAC72105.1"/>
    <property type="molecule type" value="Genomic_DNA"/>
</dbReference>
<dbReference type="EMBL" id="CH471139">
    <property type="protein sequence ID" value="EAW69474.1"/>
    <property type="molecule type" value="Genomic_DNA"/>
</dbReference>
<dbReference type="EMBL" id="CH471139">
    <property type="protein sequence ID" value="EAW69475.1"/>
    <property type="molecule type" value="Genomic_DNA"/>
</dbReference>
<dbReference type="EMBL" id="CH471139">
    <property type="protein sequence ID" value="EAW69476.1"/>
    <property type="molecule type" value="Genomic_DNA"/>
</dbReference>
<dbReference type="EMBL" id="BC000462">
    <property type="protein sequence ID" value="AAH00462.1"/>
    <property type="molecule type" value="mRNA"/>
</dbReference>
<dbReference type="EMBL" id="BC003594">
    <property type="protein sequence ID" value="AAH03594.1"/>
    <property type="molecule type" value="mRNA"/>
</dbReference>
<dbReference type="CCDS" id="CCDS12073.1"/>
<dbReference type="RefSeq" id="NP_006821.1">
    <property type="nucleotide sequence ID" value="NM_006830.4"/>
</dbReference>
<dbReference type="PDB" id="5XTE">
    <property type="method" value="EM"/>
    <property type="resolution" value="3.40 A"/>
    <property type="chains" value="G/T=2-52"/>
</dbReference>
<dbReference type="PDB" id="5XTH">
    <property type="method" value="EM"/>
    <property type="resolution" value="3.90 A"/>
    <property type="chains" value="AG/AT=2-52"/>
</dbReference>
<dbReference type="PDB" id="5XTI">
    <property type="method" value="EM"/>
    <property type="resolution" value="17.40 A"/>
    <property type="chains" value="AG/AT=2-52"/>
</dbReference>
<dbReference type="PDBsum" id="5XTE"/>
<dbReference type="PDBsum" id="5XTH"/>
<dbReference type="PDBsum" id="5XTI"/>
<dbReference type="SMR" id="O14957"/>
<dbReference type="BioGRID" id="116172">
    <property type="interactions" value="52"/>
</dbReference>
<dbReference type="ComplexPortal" id="CPX-560">
    <property type="entry name" value="Mitochondrial respiratory chain complex III"/>
</dbReference>
<dbReference type="FunCoup" id="O14957">
    <property type="interactions" value="326"/>
</dbReference>
<dbReference type="IntAct" id="O14957">
    <property type="interactions" value="48"/>
</dbReference>
<dbReference type="STRING" id="9606.ENSP00000467262"/>
<dbReference type="DrugBank" id="DB07763">
    <property type="generic name" value="(5S)-3-ANILINO-5-(2,4-DIFLUOROPHENYL)-5-METHYL-1,3-OXAZOLIDINE-2,4-DIONE"/>
</dbReference>
<dbReference type="DrugBank" id="DB07778">
    <property type="generic name" value="(S)-famoxadone"/>
</dbReference>
<dbReference type="DrugBank" id="DB08453">
    <property type="generic name" value="2-Nonyl-4-quinolinol 1-oxide"/>
</dbReference>
<dbReference type="DrugBank" id="DB04799">
    <property type="generic name" value="6-Hydroxy-5-undecyl-4,7-benzothiazoledione"/>
</dbReference>
<dbReference type="DrugBank" id="DB07401">
    <property type="generic name" value="Azoxystrobin"/>
</dbReference>
<dbReference type="DrugBank" id="DB08330">
    <property type="generic name" value="METHYL (2Z)-3-METHOXY-2-{2-[(E)-2-PHENYLVINYL]PHENYL}ACRYLATE"/>
</dbReference>
<dbReference type="DrugBank" id="DB08690">
    <property type="generic name" value="Ubiquinone Q2"/>
</dbReference>
<dbReference type="SwissPalm" id="O14957"/>
<dbReference type="BioMuta" id="UQCR11"/>
<dbReference type="jPOST" id="O14957"/>
<dbReference type="MassIVE" id="O14957"/>
<dbReference type="PaxDb" id="9606-ENSP00000467262"/>
<dbReference type="PeptideAtlas" id="O14957"/>
<dbReference type="ProteomicsDB" id="48334"/>
<dbReference type="Pumba" id="O14957"/>
<dbReference type="TopDownProteomics" id="O14957"/>
<dbReference type="Antibodypedia" id="42255">
    <property type="antibodies" value="71 antibodies from 11 providers"/>
</dbReference>
<dbReference type="DNASU" id="10975"/>
<dbReference type="Ensembl" id="ENST00000585671.2">
    <property type="protein sequence ID" value="ENSP00000466420.1"/>
    <property type="gene ID" value="ENSG00000127540.12"/>
</dbReference>
<dbReference type="Ensembl" id="ENST00000589880.1">
    <property type="protein sequence ID" value="ENSP00000467555.1"/>
    <property type="gene ID" value="ENSG00000127540.12"/>
</dbReference>
<dbReference type="Ensembl" id="ENST00000591899.8">
    <property type="protein sequence ID" value="ENSP00000467262.1"/>
    <property type="gene ID" value="ENSG00000127540.12"/>
</dbReference>
<dbReference type="GeneID" id="10975"/>
<dbReference type="KEGG" id="hsa:10975"/>
<dbReference type="MANE-Select" id="ENST00000591899.8">
    <property type="protein sequence ID" value="ENSP00000467262.1"/>
    <property type="RefSeq nucleotide sequence ID" value="NM_006830.4"/>
    <property type="RefSeq protein sequence ID" value="NP_006821.1"/>
</dbReference>
<dbReference type="UCSC" id="uc002ltm.4">
    <property type="organism name" value="human"/>
</dbReference>
<dbReference type="AGR" id="HGNC:30862"/>
<dbReference type="CTD" id="10975"/>
<dbReference type="DisGeNET" id="10975"/>
<dbReference type="GeneCards" id="UQCR11"/>
<dbReference type="HGNC" id="HGNC:30862">
    <property type="gene designation" value="UQCR11"/>
</dbReference>
<dbReference type="HPA" id="ENSG00000127540">
    <property type="expression patterns" value="Tissue enhanced (heart muscle, skeletal muscle)"/>
</dbReference>
<dbReference type="MalaCards" id="UQCR11"/>
<dbReference type="MIM" id="609711">
    <property type="type" value="gene"/>
</dbReference>
<dbReference type="neXtProt" id="NX_O14957"/>
<dbReference type="OpenTargets" id="ENSG00000127540"/>
<dbReference type="PharmGKB" id="PA165394505"/>
<dbReference type="VEuPathDB" id="HostDB:ENSG00000127540"/>
<dbReference type="eggNOG" id="ENOG502S9FZ">
    <property type="taxonomic scope" value="Eukaryota"/>
</dbReference>
<dbReference type="GeneTree" id="ENSGT00390000018299"/>
<dbReference type="HOGENOM" id="CLU_211742_0_0_1"/>
<dbReference type="InParanoid" id="O14957"/>
<dbReference type="OMA" id="LAKNWMP"/>
<dbReference type="OrthoDB" id="15743at2759"/>
<dbReference type="PAN-GO" id="O14957">
    <property type="GO annotations" value="1 GO annotation based on evolutionary models"/>
</dbReference>
<dbReference type="PhylomeDB" id="O14957"/>
<dbReference type="TreeFam" id="TF105034"/>
<dbReference type="BioCyc" id="MetaCyc:HS05111-MONOMER"/>
<dbReference type="PathwayCommons" id="O14957"/>
<dbReference type="Reactome" id="R-HSA-611105">
    <property type="pathway name" value="Respiratory electron transport"/>
</dbReference>
<dbReference type="Reactome" id="R-HSA-9865881">
    <property type="pathway name" value="Complex III assembly"/>
</dbReference>
<dbReference type="SignaLink" id="O14957"/>
<dbReference type="SIGNOR" id="O14957"/>
<dbReference type="BioGRID-ORCS" id="10975">
    <property type="hits" value="71 hits in 1151 CRISPR screens"/>
</dbReference>
<dbReference type="ChiTaRS" id="UQCR11">
    <property type="organism name" value="human"/>
</dbReference>
<dbReference type="GenomeRNAi" id="10975"/>
<dbReference type="Pharos" id="O14957">
    <property type="development level" value="Tbio"/>
</dbReference>
<dbReference type="PRO" id="PR:O14957"/>
<dbReference type="Proteomes" id="UP000005640">
    <property type="component" value="Chromosome 19"/>
</dbReference>
<dbReference type="RNAct" id="O14957">
    <property type="molecule type" value="protein"/>
</dbReference>
<dbReference type="Bgee" id="ENSG00000127540">
    <property type="expression patterns" value="Expressed in apex of heart and 148 other cell types or tissues"/>
</dbReference>
<dbReference type="GO" id="GO:0005743">
    <property type="term" value="C:mitochondrial inner membrane"/>
    <property type="evidence" value="ECO:0000314"/>
    <property type="project" value="ComplexPortal"/>
</dbReference>
<dbReference type="GO" id="GO:0005739">
    <property type="term" value="C:mitochondrion"/>
    <property type="evidence" value="ECO:0006056"/>
    <property type="project" value="FlyBase"/>
</dbReference>
<dbReference type="GO" id="GO:0045275">
    <property type="term" value="C:respiratory chain complex III"/>
    <property type="evidence" value="ECO:0007669"/>
    <property type="project" value="Ensembl"/>
</dbReference>
<dbReference type="GO" id="GO:0009055">
    <property type="term" value="F:electron transfer activity"/>
    <property type="evidence" value="ECO:0000304"/>
    <property type="project" value="UniProtKB"/>
</dbReference>
<dbReference type="GO" id="GO:0045333">
    <property type="term" value="P:cellular respiration"/>
    <property type="evidence" value="ECO:0000303"/>
    <property type="project" value="ComplexPortal"/>
</dbReference>
<dbReference type="GO" id="GO:0006091">
    <property type="term" value="P:generation of precursor metabolites and energy"/>
    <property type="evidence" value="ECO:0000304"/>
    <property type="project" value="ProtInc"/>
</dbReference>
<dbReference type="GO" id="GO:0006122">
    <property type="term" value="P:mitochondrial electron transport, ubiquinol to cytochrome c"/>
    <property type="evidence" value="ECO:0000303"/>
    <property type="project" value="ComplexPortal"/>
</dbReference>
<dbReference type="FunFam" id="1.20.5.220:FF:000004">
    <property type="entry name" value="Cytochrome b-c1 complex subunit 10"/>
    <property type="match status" value="1"/>
</dbReference>
<dbReference type="Gene3D" id="1.20.5.220">
    <property type="match status" value="1"/>
</dbReference>
<dbReference type="InterPro" id="IPR029027">
    <property type="entry name" value="Single_a-helix_sf"/>
</dbReference>
<dbReference type="InterPro" id="IPR015089">
    <property type="entry name" value="UQCR"/>
</dbReference>
<dbReference type="PANTHER" id="PTHR15420:SF2">
    <property type="entry name" value="CYTOCHROME B-C1 COMPLEX SUBUNIT 10"/>
    <property type="match status" value="1"/>
</dbReference>
<dbReference type="PANTHER" id="PTHR15420">
    <property type="entry name" value="UBIQUINOL-CYTOCHROME C REDUCTASE COMPLEX 6.4 KD PROTEIN"/>
    <property type="match status" value="1"/>
</dbReference>
<dbReference type="Pfam" id="PF08997">
    <property type="entry name" value="UCR_6-4kD"/>
    <property type="match status" value="1"/>
</dbReference>
<dbReference type="SUPFAM" id="SSF81518">
    <property type="entry name" value="Subunit XI (6.4 kDa protein) of cytochrome bc1 complex (Ubiquinol-cytochrome c reductase)"/>
    <property type="match status" value="1"/>
</dbReference>
<comment type="function">
    <text evidence="2">Component of the ubiquinol-cytochrome c oxidoreductase, a multisubunit transmembrane complex that is part of the mitochondrial electron transport chain which drives oxidative phosphorylation. The respiratory chain contains 3 multisubunit complexes succinate dehydrogenase (complex II, CII), ubiquinol-cytochrome c oxidoreductase (cytochrome b-c1 complex, complex III, CIII) and cytochrome c oxidase (complex IV, CIV), that cooperate to transfer electrons derived from NADH and succinate to molecular oxygen, creating an electrochemical gradient over the inner membrane that drives transmembrane transport and the ATP synthase. The cytochrome b-c1 complex catalyzes electron transfer from ubiquinol to cytochrome c, linking this redox reaction to translocation of protons across the mitochondrial inner membrane, with protons being carried across the membrane as hydrogens on the quinol. In the process called Q cycle, 2 protons are consumed from the matrix, 4 protons are released into the intermembrane space and 2 electrons are passed to cytochrome c. QCR10 has a role in CIII assembly and RIP1 stability.</text>
</comment>
<comment type="subunit">
    <text evidence="1 3">Component of the ubiquinol-cytochrome c oxidoreductase (cytochrome b-c1 complex, complex III, CIII), a multisubunit enzyme composed of 11 subunits. The complex is composed of 3 respiratory subunits cytochrome b, cytochrome c1 and Rieske protein UQCRFS1, 2 core protein subunits UQCRC1/QCR1 and UQCRC2/QCR2, and 6 low-molecular weight protein subunits UQCRH/QCR6, UQCRB/QCR7, UQCRQ/QCR8, UQCR10/QCR9, UQCR11/QCR10 and subunit 9, the cleavage product of Rieske protein UQCRFS1 (By similarity). The complex exists as an obligatory dimer and forms supercomplexes (SCs) in the inner mitochondrial membrane with NADH-ubiquinone oxidoreductase (complex I, CI) and cytochrome c oxidase (complex IV, CIV), resulting in different assemblies (supercomplex SCI(1)III(2)IV(1) and megacomplex MCI(2)III(2)IV(2)) (PubMed:28844695).</text>
</comment>
<comment type="subcellular location">
    <subcellularLocation>
        <location evidence="2">Mitochondrion inner membrane</location>
        <topology evidence="2">Single-pass membrane protein</topology>
    </subcellularLocation>
</comment>
<comment type="similarity">
    <text evidence="4">Belongs to the UQCR11/QCR10 family.</text>
</comment>
<protein>
    <recommendedName>
        <fullName>Cytochrome b-c1 complex subunit 10</fullName>
    </recommendedName>
    <alternativeName>
        <fullName>Complex III subunit 10</fullName>
    </alternativeName>
    <alternativeName>
        <fullName>Complex III subunit XI</fullName>
    </alternativeName>
    <alternativeName>
        <fullName>Ubiquinol-cytochrome c reductase complex 6.4 kDa protein</fullName>
    </alternativeName>
</protein>
<keyword id="KW-0002">3D-structure</keyword>
<keyword id="KW-0249">Electron transport</keyword>
<keyword id="KW-0472">Membrane</keyword>
<keyword id="KW-0496">Mitochondrion</keyword>
<keyword id="KW-0999">Mitochondrion inner membrane</keyword>
<keyword id="KW-1267">Proteomics identification</keyword>
<keyword id="KW-1185">Reference proteome</keyword>
<keyword id="KW-0679">Respiratory chain</keyword>
<keyword id="KW-0812">Transmembrane</keyword>
<keyword id="KW-1133">Transmembrane helix</keyword>
<keyword id="KW-0813">Transport</keyword>
<name>QCR10_HUMAN</name>
<organism>
    <name type="scientific">Homo sapiens</name>
    <name type="common">Human</name>
    <dbReference type="NCBI Taxonomy" id="9606"/>
    <lineage>
        <taxon>Eukaryota</taxon>
        <taxon>Metazoa</taxon>
        <taxon>Chordata</taxon>
        <taxon>Craniata</taxon>
        <taxon>Vertebrata</taxon>
        <taxon>Euteleostomi</taxon>
        <taxon>Mammalia</taxon>
        <taxon>Eutheria</taxon>
        <taxon>Euarchontoglires</taxon>
        <taxon>Primates</taxon>
        <taxon>Haplorrhini</taxon>
        <taxon>Catarrhini</taxon>
        <taxon>Hominidae</taxon>
        <taxon>Homo</taxon>
    </lineage>
</organism>